<reference key="1">
    <citation type="journal article" date="1995" name="Gene">
        <title>Cloning, mapping and expression of PEBP2 alpha C, a third gene encoding the mammalian Runt domain.</title>
        <authorList>
            <person name="Bae S.-C."/>
            <person name="Takahashi E."/>
            <person name="Zhang Y.-W."/>
            <person name="Ogawa E."/>
            <person name="Shigesada K."/>
            <person name="Namba Y."/>
            <person name="Satake M."/>
            <person name="Ito Y."/>
        </authorList>
    </citation>
    <scope>NUCLEOTIDE SEQUENCE [MRNA] (ISOFORM 1)</scope>
</reference>
<reference key="2">
    <citation type="journal article" date="1994" name="Genomics">
        <title>AML1, AML2, and AML3, the human members of the runt domain gene-family: cDNA structure, expression, and chromosomal localization.</title>
        <authorList>
            <person name="Levanon D."/>
            <person name="Negreanu V."/>
            <person name="Bernstein Y."/>
            <person name="Bar-Am I."/>
            <person name="Avivi L."/>
            <person name="Groner Y."/>
        </authorList>
    </citation>
    <scope>NUCLEOTIDE SEQUENCE [MRNA] (ISOFORM 1)</scope>
</reference>
<reference key="3">
    <citation type="submission" date="1999-02" db="EMBL/GenBank/DDBJ databases">
        <authorList>
            <person name="Groner Y."/>
        </authorList>
    </citation>
    <scope>SEQUENCE REVISION</scope>
</reference>
<reference key="4">
    <citation type="journal article" date="2006" name="Nature">
        <title>The DNA sequence and biological annotation of human chromosome 1.</title>
        <authorList>
            <person name="Gregory S.G."/>
            <person name="Barlow K.F."/>
            <person name="McLay K.E."/>
            <person name="Kaul R."/>
            <person name="Swarbreck D."/>
            <person name="Dunham A."/>
            <person name="Scott C.E."/>
            <person name="Howe K.L."/>
            <person name="Woodfine K."/>
            <person name="Spencer C.C.A."/>
            <person name="Jones M.C."/>
            <person name="Gillson C."/>
            <person name="Searle S."/>
            <person name="Zhou Y."/>
            <person name="Kokocinski F."/>
            <person name="McDonald L."/>
            <person name="Evans R."/>
            <person name="Phillips K."/>
            <person name="Atkinson A."/>
            <person name="Cooper R."/>
            <person name="Jones C."/>
            <person name="Hall R.E."/>
            <person name="Andrews T.D."/>
            <person name="Lloyd C."/>
            <person name="Ainscough R."/>
            <person name="Almeida J.P."/>
            <person name="Ambrose K.D."/>
            <person name="Anderson F."/>
            <person name="Andrew R.W."/>
            <person name="Ashwell R.I.S."/>
            <person name="Aubin K."/>
            <person name="Babbage A.K."/>
            <person name="Bagguley C.L."/>
            <person name="Bailey J."/>
            <person name="Beasley H."/>
            <person name="Bethel G."/>
            <person name="Bird C.P."/>
            <person name="Bray-Allen S."/>
            <person name="Brown J.Y."/>
            <person name="Brown A.J."/>
            <person name="Buckley D."/>
            <person name="Burton J."/>
            <person name="Bye J."/>
            <person name="Carder C."/>
            <person name="Chapman J.C."/>
            <person name="Clark S.Y."/>
            <person name="Clarke G."/>
            <person name="Clee C."/>
            <person name="Cobley V."/>
            <person name="Collier R.E."/>
            <person name="Corby N."/>
            <person name="Coville G.J."/>
            <person name="Davies J."/>
            <person name="Deadman R."/>
            <person name="Dunn M."/>
            <person name="Earthrowl M."/>
            <person name="Ellington A.G."/>
            <person name="Errington H."/>
            <person name="Frankish A."/>
            <person name="Frankland J."/>
            <person name="French L."/>
            <person name="Garner P."/>
            <person name="Garnett J."/>
            <person name="Gay L."/>
            <person name="Ghori M.R.J."/>
            <person name="Gibson R."/>
            <person name="Gilby L.M."/>
            <person name="Gillett W."/>
            <person name="Glithero R.J."/>
            <person name="Grafham D.V."/>
            <person name="Griffiths C."/>
            <person name="Griffiths-Jones S."/>
            <person name="Grocock R."/>
            <person name="Hammond S."/>
            <person name="Harrison E.S.I."/>
            <person name="Hart E."/>
            <person name="Haugen E."/>
            <person name="Heath P.D."/>
            <person name="Holmes S."/>
            <person name="Holt K."/>
            <person name="Howden P.J."/>
            <person name="Hunt A.R."/>
            <person name="Hunt S.E."/>
            <person name="Hunter G."/>
            <person name="Isherwood J."/>
            <person name="James R."/>
            <person name="Johnson C."/>
            <person name="Johnson D."/>
            <person name="Joy A."/>
            <person name="Kay M."/>
            <person name="Kershaw J.K."/>
            <person name="Kibukawa M."/>
            <person name="Kimberley A.M."/>
            <person name="King A."/>
            <person name="Knights A.J."/>
            <person name="Lad H."/>
            <person name="Laird G."/>
            <person name="Lawlor S."/>
            <person name="Leongamornlert D.A."/>
            <person name="Lloyd D.M."/>
            <person name="Loveland J."/>
            <person name="Lovell J."/>
            <person name="Lush M.J."/>
            <person name="Lyne R."/>
            <person name="Martin S."/>
            <person name="Mashreghi-Mohammadi M."/>
            <person name="Matthews L."/>
            <person name="Matthews N.S.W."/>
            <person name="McLaren S."/>
            <person name="Milne S."/>
            <person name="Mistry S."/>
            <person name="Moore M.J.F."/>
            <person name="Nickerson T."/>
            <person name="O'Dell C.N."/>
            <person name="Oliver K."/>
            <person name="Palmeiri A."/>
            <person name="Palmer S.A."/>
            <person name="Parker A."/>
            <person name="Patel D."/>
            <person name="Pearce A.V."/>
            <person name="Peck A.I."/>
            <person name="Pelan S."/>
            <person name="Phelps K."/>
            <person name="Phillimore B.J."/>
            <person name="Plumb R."/>
            <person name="Rajan J."/>
            <person name="Raymond C."/>
            <person name="Rouse G."/>
            <person name="Saenphimmachak C."/>
            <person name="Sehra H.K."/>
            <person name="Sheridan E."/>
            <person name="Shownkeen R."/>
            <person name="Sims S."/>
            <person name="Skuce C.D."/>
            <person name="Smith M."/>
            <person name="Steward C."/>
            <person name="Subramanian S."/>
            <person name="Sycamore N."/>
            <person name="Tracey A."/>
            <person name="Tromans A."/>
            <person name="Van Helmond Z."/>
            <person name="Wall M."/>
            <person name="Wallis J.M."/>
            <person name="White S."/>
            <person name="Whitehead S.L."/>
            <person name="Wilkinson J.E."/>
            <person name="Willey D.L."/>
            <person name="Williams H."/>
            <person name="Wilming L."/>
            <person name="Wray P.W."/>
            <person name="Wu Z."/>
            <person name="Coulson A."/>
            <person name="Vaudin M."/>
            <person name="Sulston J.E."/>
            <person name="Durbin R.M."/>
            <person name="Hubbard T."/>
            <person name="Wooster R."/>
            <person name="Dunham I."/>
            <person name="Carter N.P."/>
            <person name="McVean G."/>
            <person name="Ross M.T."/>
            <person name="Harrow J."/>
            <person name="Olson M.V."/>
            <person name="Beck S."/>
            <person name="Rogers J."/>
            <person name="Bentley D.R."/>
        </authorList>
    </citation>
    <scope>NUCLEOTIDE SEQUENCE [LARGE SCALE GENOMIC DNA]</scope>
</reference>
<reference key="5">
    <citation type="submission" date="2005-07" db="EMBL/GenBank/DDBJ databases">
        <authorList>
            <person name="Mural R.J."/>
            <person name="Istrail S."/>
            <person name="Sutton G."/>
            <person name="Florea L."/>
            <person name="Halpern A.L."/>
            <person name="Mobarry C.M."/>
            <person name="Lippert R."/>
            <person name="Walenz B."/>
            <person name="Shatkay H."/>
            <person name="Dew I."/>
            <person name="Miller J.R."/>
            <person name="Flanigan M.J."/>
            <person name="Edwards N.J."/>
            <person name="Bolanos R."/>
            <person name="Fasulo D."/>
            <person name="Halldorsson B.V."/>
            <person name="Hannenhalli S."/>
            <person name="Turner R."/>
            <person name="Yooseph S."/>
            <person name="Lu F."/>
            <person name="Nusskern D.R."/>
            <person name="Shue B.C."/>
            <person name="Zheng X.H."/>
            <person name="Zhong F."/>
            <person name="Delcher A.L."/>
            <person name="Huson D.H."/>
            <person name="Kravitz S.A."/>
            <person name="Mouchard L."/>
            <person name="Reinert K."/>
            <person name="Remington K.A."/>
            <person name="Clark A.G."/>
            <person name="Waterman M.S."/>
            <person name="Eichler E.E."/>
            <person name="Adams M.D."/>
            <person name="Hunkapiller M.W."/>
            <person name="Myers E.W."/>
            <person name="Venter J.C."/>
        </authorList>
    </citation>
    <scope>NUCLEOTIDE SEQUENCE [LARGE SCALE GENOMIC DNA]</scope>
</reference>
<reference key="6">
    <citation type="journal article" date="2004" name="Genome Res.">
        <title>The status, quality, and expansion of the NIH full-length cDNA project: the Mammalian Gene Collection (MGC).</title>
        <authorList>
            <consortium name="The MGC Project Team"/>
        </authorList>
    </citation>
    <scope>NUCLEOTIDE SEQUENCE [LARGE SCALE MRNA] (ISOFORM 2)</scope>
    <source>
        <tissue>Skin</tissue>
    </source>
</reference>
<reference key="7">
    <citation type="journal article" date="1995" name="Genomics">
        <title>Identification of a new murine runt domain-containing gene, Cbfa3, and localization of the human homolog, CBFA3, to chromosome 1p35-pter.</title>
        <authorList>
            <person name="Wijmenga C."/>
            <person name="Speck N.A."/>
            <person name="Dracopoli N.C."/>
            <person name="Hofker M.H."/>
            <person name="Liu P."/>
            <person name="Collins F.S."/>
        </authorList>
    </citation>
    <scope>NUCLEOTIDE SEQUENCE [GENOMIC DNA] OF 95-148</scope>
</reference>
<reference key="8">
    <citation type="journal article" date="1998" name="Proc. Natl. Acad. Sci. U.S.A.">
        <title>Transcriptional repression by AML1 and LEF-1 is mediated by the TLE/Groucho corepressors.</title>
        <authorList>
            <person name="Levanon D."/>
            <person name="Goldstein R.E."/>
            <person name="Bernstein Y."/>
            <person name="Tang H."/>
            <person name="Goldenberg D."/>
            <person name="Stifani S."/>
            <person name="Paroush Z."/>
            <person name="Groner Y."/>
        </authorList>
    </citation>
    <scope>INTERACTION WITH TLE1</scope>
</reference>
<reference key="9">
    <citation type="journal article" date="2006" name="Oncogene">
        <title>RUNX1 associates with histone deacetylases and SUV39H1 to repress transcription.</title>
        <authorList>
            <person name="Reed-Inderbitzin E."/>
            <person name="Moreno-Miralles I."/>
            <person name="Vanden-Eynden S.K."/>
            <person name="Xie J."/>
            <person name="Lutterbach B."/>
            <person name="Durst-Goodwin K.L."/>
            <person name="Luce K.S."/>
            <person name="Irvin B.J."/>
            <person name="Cleary M.L."/>
            <person name="Brandt S.J."/>
            <person name="Hiebert S.W."/>
        </authorList>
    </citation>
    <scope>INTERACTION WITH SUV39H1</scope>
</reference>
<reference key="10">
    <citation type="journal article" date="2007" name="Nature">
        <title>Foxp3 controls regulatory T-cell function by interacting with AML1/Runx1.</title>
        <authorList>
            <person name="Ono M."/>
            <person name="Yaguchi H."/>
            <person name="Ohkura N."/>
            <person name="Kitabayashi I."/>
            <person name="Nagamura Y."/>
            <person name="Nomura T."/>
            <person name="Miyachi Y."/>
            <person name="Tsukada T."/>
            <person name="Sakaguchi S."/>
        </authorList>
    </citation>
    <scope>INTERACTION WITH FOXP3</scope>
</reference>
<reference key="11">
    <citation type="journal article" date="2008" name="J. Proteome Res.">
        <title>Combining protein-based IMAC, peptide-based IMAC, and MudPIT for efficient phosphoproteomic analysis.</title>
        <authorList>
            <person name="Cantin G.T."/>
            <person name="Yi W."/>
            <person name="Lu B."/>
            <person name="Park S.K."/>
            <person name="Xu T."/>
            <person name="Lee J.-D."/>
            <person name="Yates J.R. III"/>
        </authorList>
    </citation>
    <scope>PHOSPHORYLATION [LARGE SCALE ANALYSIS] AT SER-243</scope>
    <scope>IDENTIFICATION BY MASS SPECTROMETRY [LARGE SCALE ANALYSIS]</scope>
    <source>
        <tissue>Cervix carcinoma</tissue>
    </source>
</reference>
<reference key="12">
    <citation type="journal article" date="2010" name="Biochem. Biophys. Res. Commun.">
        <title>Tumor suppressor, AT motif binding factor 1 (ATBF1), translocates to the nucleus with runt domain transcription factor 3 (RUNX3) in response to TGF-beta signal transduction.</title>
        <authorList>
            <person name="Mabuchi M."/>
            <person name="Kataoka H."/>
            <person name="Miura Y."/>
            <person name="Kim T.S."/>
            <person name="Kawaguchi M."/>
            <person name="Ebi M."/>
            <person name="Tanaka M."/>
            <person name="Mori Y."/>
            <person name="Kubota E."/>
            <person name="Mizushima T."/>
            <person name="Shimura T."/>
            <person name="Mizoshita T."/>
            <person name="Tanida S."/>
            <person name="Kamiya T."/>
            <person name="Asai K."/>
            <person name="Joh T."/>
        </authorList>
    </citation>
    <scope>FUNCTION</scope>
    <scope>INTERACTION WITH ZFHX3</scope>
    <scope>SUBCELLULAR LOCATION</scope>
    <scope>TISSUE SPECIFICITY</scope>
</reference>
<reference key="13">
    <citation type="journal article" date="2010" name="J. Biol. Chem.">
        <title>Src kinase phosphorylates RUNX3 at tyrosine residues and localizes the protein in the cytoplasm.</title>
        <authorList>
            <person name="Goh Y.M."/>
            <person name="Cinghu S."/>
            <person name="Hong E.T."/>
            <person name="Lee Y.S."/>
            <person name="Kim J.H."/>
            <person name="Jang J.W."/>
            <person name="Li Y.H."/>
            <person name="Chi X.Z."/>
            <person name="Lee K.S."/>
            <person name="Wee H."/>
            <person name="Ito Y."/>
            <person name="Oh B.C."/>
            <person name="Bae S.C."/>
        </authorList>
    </citation>
    <scope>SUBCELLULAR LOCATION</scope>
    <scope>PHOSPHORYLATION</scope>
    <scope>INTERACTION WITH SRC; FYN AND LCK</scope>
</reference>
<reference key="14">
    <citation type="journal article" date="2017" name="Nat. Struct. Mol. Biol.">
        <title>Site-specific mapping of the human SUMO proteome reveals co-modification with phosphorylation.</title>
        <authorList>
            <person name="Hendriks I.A."/>
            <person name="Lyon D."/>
            <person name="Young C."/>
            <person name="Jensen L.J."/>
            <person name="Vertegaal A.C."/>
            <person name="Nielsen M.L."/>
        </authorList>
    </citation>
    <scope>SUMOYLATION [LARGE SCALE ANALYSIS] AT LYS-192</scope>
    <scope>IDENTIFICATION BY MASS SPECTROMETRY [LARGE SCALE ANALYSIS]</scope>
</reference>
<organism>
    <name type="scientific">Homo sapiens</name>
    <name type="common">Human</name>
    <dbReference type="NCBI Taxonomy" id="9606"/>
    <lineage>
        <taxon>Eukaryota</taxon>
        <taxon>Metazoa</taxon>
        <taxon>Chordata</taxon>
        <taxon>Craniata</taxon>
        <taxon>Vertebrata</taxon>
        <taxon>Euteleostomi</taxon>
        <taxon>Mammalia</taxon>
        <taxon>Eutheria</taxon>
        <taxon>Euarchontoglires</taxon>
        <taxon>Primates</taxon>
        <taxon>Haplorrhini</taxon>
        <taxon>Catarrhini</taxon>
        <taxon>Hominidae</taxon>
        <taxon>Homo</taxon>
    </lineage>
</organism>
<accession>Q13761</accession>
<accession>B1AJV5</accession>
<accession>Q12969</accession>
<accession>Q13760</accession>
<evidence type="ECO:0000250" key="1">
    <source>
        <dbReference type="UniProtKB" id="Q64131"/>
    </source>
</evidence>
<evidence type="ECO:0000255" key="2">
    <source>
        <dbReference type="PROSITE-ProRule" id="PRU00399"/>
    </source>
</evidence>
<evidence type="ECO:0000256" key="3">
    <source>
        <dbReference type="SAM" id="MobiDB-lite"/>
    </source>
</evidence>
<evidence type="ECO:0000269" key="4">
    <source>
    </source>
</evidence>
<evidence type="ECO:0000269" key="5">
    <source>
    </source>
</evidence>
<evidence type="ECO:0000269" key="6">
    <source>
    </source>
</evidence>
<evidence type="ECO:0000269" key="7">
    <source>
    </source>
</evidence>
<evidence type="ECO:0000269" key="8">
    <source>
    </source>
</evidence>
<evidence type="ECO:0000303" key="9">
    <source>
    </source>
</evidence>
<evidence type="ECO:0000305" key="10"/>
<evidence type="ECO:0007744" key="11">
    <source>
    </source>
</evidence>
<evidence type="ECO:0007744" key="12">
    <source>
    </source>
</evidence>
<comment type="function">
    <text evidence="1 7">Forms the heterodimeric complex core-binding factor (CBF) with CBFB. RUNX members modulate the transcription of their target genes through recognizing the core consensus binding sequence 5'-TGTGGT-3', or very rarely, 5'-TGCGGT-3', within their regulatory regions via their runt domain, while CBFB is a non-DNA-binding regulatory subunit that allosterically enhances the sequence-specific DNA-binding capacity of RUNX. The heterodimers bind to the core site of a number of enhancers and promoters, including murine leukemia virus, polyomavirus enhancer, T-cell receptor enhancers, LCK, IL3 and GM-CSF promoters (By similarity). May be involved in the control of cellular proliferation and/or differentiation. In association with ZFHX3, up-regulates CDKN1A promoter activity following TGF-beta stimulation (PubMed:20599712). CBF complexes repress ZBTB7B transcription factor during cytotoxic (CD8+) T cell development. They bind to RUNX-binding sequence within the ZBTB7B locus acting as transcriptional silencer and allowing for cytotoxic T cell differentiation. CBF complexes binding to the transcriptional silencer is essential for recruitment of nuclear protein complexes that catalyze epigenetic modifications to establish epigenetic ZBTB7B silencing (By similarity). Necessary for the development and survival of sensory neurons expressing parvalbumin (By similarity).</text>
</comment>
<comment type="subunit">
    <text evidence="1 4 5 6 7 8">Heterodimer with CBFB. RUNX3 binds DNA as a monomer and through the Runt domain. DNA-binding is increased by heterodimerization (By similarity). Interacts with TLE1 and SUV39H1 (PubMed:16652147, PubMed:9751710). The tyrosine phosphorylated form (via runt domain) interacts with SRC (via protein kinase domain) (PubMed:20100835). Interacts with FYN and LCK (PubMed:20100835). Interacts with FOXP3 (PubMed:17377532). Interacts with ZFHX3 (PubMed:20599712). Interacts with TBX21 (By similarity).</text>
</comment>
<comment type="interaction">
    <interactant intactId="EBI-925990">
        <id>Q13761</id>
    </interactant>
    <interactant intactId="EBI-2874802">
        <id>P25440</id>
        <label>BRD2</label>
    </interactant>
    <organismsDiffer>false</organismsDiffer>
    <experiments>8</experiments>
</comment>
<comment type="interaction">
    <interactant intactId="EBI-925990">
        <id>Q13761</id>
    </interactant>
    <interactant intactId="EBI-718750">
        <id>Q13951</id>
        <label>CBFB</label>
    </interactant>
    <organismsDiffer>false</organismsDiffer>
    <experiments>3</experiments>
</comment>
<comment type="interaction">
    <interactant intactId="EBI-925990">
        <id>Q13761</id>
    </interactant>
    <interactant intactId="EBI-491549">
        <id>P35222</id>
        <label>CTNNB1</label>
    </interactant>
    <organismsDiffer>false</organismsDiffer>
    <experiments>12</experiments>
</comment>
<comment type="interaction">
    <interactant intactId="EBI-925990">
        <id>Q13761</id>
    </interactant>
    <interactant intactId="EBI-447295">
        <id>Q09472</id>
        <label>EP300</label>
    </interactant>
    <organismsDiffer>false</organismsDiffer>
    <experiments>7</experiments>
</comment>
<comment type="interaction">
    <interactant intactId="EBI-925990">
        <id>Q13761</id>
    </interactant>
    <interactant intactId="EBI-308629">
        <id>P56524</id>
        <label>HDAC4</label>
    </interactant>
    <organismsDiffer>false</organismsDiffer>
    <experiments>9</experiments>
</comment>
<comment type="interaction">
    <interactant intactId="EBI-925990">
        <id>Q13761</id>
    </interactant>
    <interactant intactId="EBI-715576">
        <id>Q9UQL6</id>
        <label>HDAC5</label>
    </interactant>
    <organismsDiffer>false</organismsDiffer>
    <experiments>5</experiments>
</comment>
<comment type="interaction">
    <interactant intactId="EBI-925990">
        <id>Q13761</id>
    </interactant>
    <interactant intactId="EBI-2864451">
        <id>Q5U5Q3</id>
        <label>MEX3C</label>
    </interactant>
    <organismsDiffer>false</organismsDiffer>
    <experiments>4</experiments>
</comment>
<comment type="interaction">
    <interactant intactId="EBI-925990">
        <id>Q13761</id>
    </interactant>
    <interactant intactId="EBI-924724">
        <id>Q9NQB0</id>
        <label>TCF7L2</label>
    </interactant>
    <organismsDiffer>false</organismsDiffer>
    <experiments>14</experiments>
</comment>
<comment type="interaction">
    <interactant intactId="EBI-925990">
        <id>Q13761</id>
    </interactant>
    <interactant intactId="EBI-711424">
        <id>Q04724</id>
        <label>TLE1</label>
    </interactant>
    <organismsDiffer>false</organismsDiffer>
    <experiments>3</experiments>
</comment>
<comment type="interaction">
    <interactant intactId="EBI-12145465">
        <id>Q13761-2</id>
    </interactant>
    <interactant intactId="EBI-718750">
        <id>Q13951</id>
        <label>CBFB</label>
    </interactant>
    <organismsDiffer>false</organismsDiffer>
    <experiments>3</experiments>
</comment>
<comment type="interaction">
    <interactant intactId="EBI-12145465">
        <id>Q13761-2</id>
    </interactant>
    <interactant intactId="EBI-11978177">
        <id>Q96NT3-2</id>
        <label>GUCD1</label>
    </interactant>
    <organismsDiffer>false</organismsDiffer>
    <experiments>3</experiments>
</comment>
<comment type="subcellular location">
    <subcellularLocation>
        <location evidence="2 6 7">Nucleus</location>
    </subcellularLocation>
    <subcellularLocation>
        <location evidence="6 7">Cytoplasm</location>
    </subcellularLocation>
    <text evidence="7">The tyrosine phosphorylated form localizes to the cytoplasm. Translocates from the cytoplasm to the nucleus following TGF-beta stimulation.</text>
</comment>
<comment type="alternative products">
    <event type="alternative splicing"/>
    <isoform>
        <id>Q13761-1</id>
        <name>1</name>
        <sequence type="displayed"/>
    </isoform>
    <isoform>
        <id>Q13761-2</id>
        <name>2</name>
        <sequence type="described" ref="VSP_005949"/>
    </isoform>
</comment>
<comment type="tissue specificity">
    <text evidence="7">Expressed in gastric cancer tissues (at protein level).</text>
</comment>
<comment type="domain">
    <text>A proline/serine/threonine rich region at the C-terminus is necessary for transcriptional activation of target genes.</text>
</comment>
<comment type="PTM">
    <text evidence="6">Phosphorylated on tyrosine residues by SRC. Phosphorylated by LCK and FYN.</text>
</comment>
<keyword id="KW-0002">3D-structure</keyword>
<keyword id="KW-0010">Activator</keyword>
<keyword id="KW-0025">Alternative splicing</keyword>
<keyword id="KW-0963">Cytoplasm</keyword>
<keyword id="KW-0238">DNA-binding</keyword>
<keyword id="KW-1017">Isopeptide bond</keyword>
<keyword id="KW-0539">Nucleus</keyword>
<keyword id="KW-0597">Phosphoprotein</keyword>
<keyword id="KW-1267">Proteomics identification</keyword>
<keyword id="KW-1185">Reference proteome</keyword>
<keyword id="KW-0804">Transcription</keyword>
<keyword id="KW-0805">Transcription regulation</keyword>
<keyword id="KW-0832">Ubl conjugation</keyword>
<dbReference type="EMBL" id="Z35278">
    <property type="protein sequence ID" value="CAA84541.1"/>
    <property type="molecule type" value="mRNA"/>
</dbReference>
<dbReference type="EMBL" id="X79550">
    <property type="protein sequence ID" value="CAA56093.2"/>
    <property type="molecule type" value="mRNA"/>
</dbReference>
<dbReference type="EMBL" id="AL023096">
    <property type="status" value="NOT_ANNOTATED_CDS"/>
    <property type="molecule type" value="Genomic_DNA"/>
</dbReference>
<dbReference type="EMBL" id="AL445471">
    <property type="status" value="NOT_ANNOTATED_CDS"/>
    <property type="molecule type" value="Genomic_DNA"/>
</dbReference>
<dbReference type="EMBL" id="CH471134">
    <property type="protein sequence ID" value="EAW95148.1"/>
    <property type="molecule type" value="Genomic_DNA"/>
</dbReference>
<dbReference type="EMBL" id="BC013362">
    <property type="protein sequence ID" value="AAH13362.1"/>
    <property type="molecule type" value="mRNA"/>
</dbReference>
<dbReference type="EMBL" id="U14520">
    <property type="protein sequence ID" value="AAA86465.1"/>
    <property type="molecule type" value="Genomic_DNA"/>
</dbReference>
<dbReference type="CCDS" id="CCDS257.1">
    <molecule id="Q13761-1"/>
</dbReference>
<dbReference type="CCDS" id="CCDS30633.1">
    <molecule id="Q13761-2"/>
</dbReference>
<dbReference type="PIR" id="B55563">
    <property type="entry name" value="B55563"/>
</dbReference>
<dbReference type="PIR" id="S60078">
    <property type="entry name" value="S60078"/>
</dbReference>
<dbReference type="RefSeq" id="NP_001026850.1">
    <molecule id="Q13761-2"/>
    <property type="nucleotide sequence ID" value="NM_001031680.2"/>
</dbReference>
<dbReference type="RefSeq" id="NP_001307601.1">
    <molecule id="Q13761-2"/>
    <property type="nucleotide sequence ID" value="NM_001320672.1"/>
</dbReference>
<dbReference type="RefSeq" id="NP_004341.1">
    <molecule id="Q13761-1"/>
    <property type="nucleotide sequence ID" value="NM_004350.3"/>
</dbReference>
<dbReference type="RefSeq" id="XP_005246081.1">
    <molecule id="Q13761-2"/>
    <property type="nucleotide sequence ID" value="XM_005246024.5"/>
</dbReference>
<dbReference type="RefSeq" id="XP_047289087.1">
    <molecule id="Q13761-2"/>
    <property type="nucleotide sequence ID" value="XM_047433131.1"/>
</dbReference>
<dbReference type="PDB" id="5W69">
    <property type="method" value="X-ray"/>
    <property type="resolution" value="2.80 A"/>
    <property type="chains" value="I/J/K/L=133-141"/>
</dbReference>
<dbReference type="PDBsum" id="5W69"/>
<dbReference type="SMR" id="Q13761"/>
<dbReference type="BioGRID" id="107312">
    <property type="interactions" value="73"/>
</dbReference>
<dbReference type="CORUM" id="Q13761"/>
<dbReference type="ELM" id="Q13761"/>
<dbReference type="FunCoup" id="Q13761">
    <property type="interactions" value="4330"/>
</dbReference>
<dbReference type="IntAct" id="Q13761">
    <property type="interactions" value="23"/>
</dbReference>
<dbReference type="MINT" id="Q13761"/>
<dbReference type="STRING" id="9606.ENSP00000382800"/>
<dbReference type="GlyCosmos" id="Q13761">
    <property type="glycosylation" value="11 sites, 1 glycan"/>
</dbReference>
<dbReference type="GlyGen" id="Q13761">
    <property type="glycosylation" value="12 sites, 1 O-linked glycan (11 sites)"/>
</dbReference>
<dbReference type="iPTMnet" id="Q13761"/>
<dbReference type="PhosphoSitePlus" id="Q13761"/>
<dbReference type="SwissPalm" id="Q13761"/>
<dbReference type="BioMuta" id="RUNX3"/>
<dbReference type="DMDM" id="17368453"/>
<dbReference type="jPOST" id="Q13761"/>
<dbReference type="MassIVE" id="Q13761"/>
<dbReference type="PaxDb" id="9606-ENSP00000382800"/>
<dbReference type="PeptideAtlas" id="Q13761"/>
<dbReference type="ProteomicsDB" id="59677">
    <molecule id="Q13761-1"/>
</dbReference>
<dbReference type="ProteomicsDB" id="59678">
    <molecule id="Q13761-2"/>
</dbReference>
<dbReference type="Antibodypedia" id="1124">
    <property type="antibodies" value="717 antibodies from 42 providers"/>
</dbReference>
<dbReference type="DNASU" id="864"/>
<dbReference type="Ensembl" id="ENST00000308873.11">
    <molecule id="Q13761-1"/>
    <property type="protein sequence ID" value="ENSP00000308051.6"/>
    <property type="gene ID" value="ENSG00000020633.19"/>
</dbReference>
<dbReference type="Ensembl" id="ENST00000338888.4">
    <molecule id="Q13761-2"/>
    <property type="protein sequence ID" value="ENSP00000343477.3"/>
    <property type="gene ID" value="ENSG00000020633.19"/>
</dbReference>
<dbReference type="Ensembl" id="ENST00000399916.5">
    <molecule id="Q13761-2"/>
    <property type="protein sequence ID" value="ENSP00000382800.1"/>
    <property type="gene ID" value="ENSG00000020633.19"/>
</dbReference>
<dbReference type="GeneID" id="864"/>
<dbReference type="KEGG" id="hsa:864"/>
<dbReference type="MANE-Select" id="ENST00000308873.11">
    <property type="protein sequence ID" value="ENSP00000308051.6"/>
    <property type="RefSeq nucleotide sequence ID" value="NM_004350.3"/>
    <property type="RefSeq protein sequence ID" value="NP_004341.1"/>
</dbReference>
<dbReference type="UCSC" id="uc001bjq.4">
    <molecule id="Q13761-1"/>
    <property type="organism name" value="human"/>
</dbReference>
<dbReference type="AGR" id="HGNC:10473"/>
<dbReference type="CTD" id="864"/>
<dbReference type="DisGeNET" id="864"/>
<dbReference type="GeneCards" id="RUNX3"/>
<dbReference type="HGNC" id="HGNC:10473">
    <property type="gene designation" value="RUNX3"/>
</dbReference>
<dbReference type="HPA" id="ENSG00000020633">
    <property type="expression patterns" value="Tissue enhanced (bone marrow, lymphoid tissue)"/>
</dbReference>
<dbReference type="MIM" id="600210">
    <property type="type" value="gene"/>
</dbReference>
<dbReference type="neXtProt" id="NX_Q13761"/>
<dbReference type="OpenTargets" id="ENSG00000020633"/>
<dbReference type="PharmGKB" id="PA34886"/>
<dbReference type="VEuPathDB" id="HostDB:ENSG00000020633"/>
<dbReference type="eggNOG" id="KOG3982">
    <property type="taxonomic scope" value="Eukaryota"/>
</dbReference>
<dbReference type="GeneTree" id="ENSGT00940000156598"/>
<dbReference type="HOGENOM" id="CLU_032910_3_0_1"/>
<dbReference type="InParanoid" id="Q13761"/>
<dbReference type="OMA" id="TQGLWPE"/>
<dbReference type="OrthoDB" id="10029800at2759"/>
<dbReference type="PAN-GO" id="Q13761">
    <property type="GO annotations" value="8 GO annotations based on evolutionary models"/>
</dbReference>
<dbReference type="PhylomeDB" id="Q13761"/>
<dbReference type="TreeFam" id="TF321496"/>
<dbReference type="PathwayCommons" id="Q13761"/>
<dbReference type="Reactome" id="R-HSA-4411364">
    <property type="pathway name" value="Binding of TCF/LEF:CTNNB1 to target gene promoters"/>
</dbReference>
<dbReference type="Reactome" id="R-HSA-8941855">
    <property type="pathway name" value="RUNX3 regulates CDKN1A transcription"/>
</dbReference>
<dbReference type="Reactome" id="R-HSA-8941856">
    <property type="pathway name" value="RUNX3 regulates NOTCH signaling"/>
</dbReference>
<dbReference type="Reactome" id="R-HSA-8941858">
    <property type="pathway name" value="Regulation of RUNX3 expression and activity"/>
</dbReference>
<dbReference type="Reactome" id="R-HSA-8949275">
    <property type="pathway name" value="RUNX3 Regulates Immune Response and Cell Migration"/>
</dbReference>
<dbReference type="Reactome" id="R-HSA-8951430">
    <property type="pathway name" value="RUNX3 regulates WNT signaling"/>
</dbReference>
<dbReference type="Reactome" id="R-HSA-8951671">
    <property type="pathway name" value="RUNX3 regulates YAP1-mediated transcription"/>
</dbReference>
<dbReference type="Reactome" id="R-HSA-8951911">
    <property type="pathway name" value="RUNX3 regulates RUNX1-mediated transcription"/>
</dbReference>
<dbReference type="Reactome" id="R-HSA-8951936">
    <property type="pathway name" value="RUNX3 regulates p14-ARF"/>
</dbReference>
<dbReference type="Reactome" id="R-HSA-8952158">
    <property type="pathway name" value="RUNX3 regulates BCL2L11 (BIM) transcription"/>
</dbReference>
<dbReference type="SignaLink" id="Q13761"/>
<dbReference type="SIGNOR" id="Q13761"/>
<dbReference type="BioGRID-ORCS" id="864">
    <property type="hits" value="18 hits in 1173 CRISPR screens"/>
</dbReference>
<dbReference type="CD-CODE" id="1A18FFC4">
    <property type="entry name" value="Paraspeckle"/>
</dbReference>
<dbReference type="CD-CODE" id="8C2F96ED">
    <property type="entry name" value="Centrosome"/>
</dbReference>
<dbReference type="ChiTaRS" id="RUNX3">
    <property type="organism name" value="human"/>
</dbReference>
<dbReference type="GeneWiki" id="RUNX3"/>
<dbReference type="GenomeRNAi" id="864"/>
<dbReference type="Pharos" id="Q13761">
    <property type="development level" value="Tbio"/>
</dbReference>
<dbReference type="PRO" id="PR:Q13761"/>
<dbReference type="Proteomes" id="UP000005640">
    <property type="component" value="Chromosome 1"/>
</dbReference>
<dbReference type="RNAct" id="Q13761">
    <property type="molecule type" value="protein"/>
</dbReference>
<dbReference type="Bgee" id="ENSG00000020633">
    <property type="expression patterns" value="Expressed in granulocyte and 163 other cell types or tissues"/>
</dbReference>
<dbReference type="ExpressionAtlas" id="Q13761">
    <property type="expression patterns" value="baseline and differential"/>
</dbReference>
<dbReference type="GO" id="GO:0000785">
    <property type="term" value="C:chromatin"/>
    <property type="evidence" value="ECO:0000250"/>
    <property type="project" value="BHF-UCL"/>
</dbReference>
<dbReference type="GO" id="GO:0016513">
    <property type="term" value="C:core-binding factor complex"/>
    <property type="evidence" value="ECO:0000304"/>
    <property type="project" value="UniProtKB"/>
</dbReference>
<dbReference type="GO" id="GO:0005737">
    <property type="term" value="C:cytoplasm"/>
    <property type="evidence" value="ECO:0000314"/>
    <property type="project" value="UniProtKB"/>
</dbReference>
<dbReference type="GO" id="GO:0005829">
    <property type="term" value="C:cytosol"/>
    <property type="evidence" value="ECO:0000314"/>
    <property type="project" value="HPA"/>
</dbReference>
<dbReference type="GO" id="GO:0043231">
    <property type="term" value="C:intracellular membrane-bounded organelle"/>
    <property type="evidence" value="ECO:0000314"/>
    <property type="project" value="HPA"/>
</dbReference>
<dbReference type="GO" id="GO:0005730">
    <property type="term" value="C:nucleolus"/>
    <property type="evidence" value="ECO:0000314"/>
    <property type="project" value="HPA"/>
</dbReference>
<dbReference type="GO" id="GO:0005654">
    <property type="term" value="C:nucleoplasm"/>
    <property type="evidence" value="ECO:0000314"/>
    <property type="project" value="HPA"/>
</dbReference>
<dbReference type="GO" id="GO:0005634">
    <property type="term" value="C:nucleus"/>
    <property type="evidence" value="ECO:0000314"/>
    <property type="project" value="UniProtKB"/>
</dbReference>
<dbReference type="GO" id="GO:0005524">
    <property type="term" value="F:ATP binding"/>
    <property type="evidence" value="ECO:0000303"/>
    <property type="project" value="UniProtKB"/>
</dbReference>
<dbReference type="GO" id="GO:0003700">
    <property type="term" value="F:DNA-binding transcription factor activity"/>
    <property type="evidence" value="ECO:0000304"/>
    <property type="project" value="ProtInc"/>
</dbReference>
<dbReference type="GO" id="GO:0000981">
    <property type="term" value="F:DNA-binding transcription factor activity, RNA polymerase II-specific"/>
    <property type="evidence" value="ECO:0000250"/>
    <property type="project" value="BHF-UCL"/>
</dbReference>
<dbReference type="GO" id="GO:0000978">
    <property type="term" value="F:RNA polymerase II cis-regulatory region sequence-specific DNA binding"/>
    <property type="evidence" value="ECO:0000318"/>
    <property type="project" value="GO_Central"/>
</dbReference>
<dbReference type="GO" id="GO:0000977">
    <property type="term" value="F:RNA polymerase II transcription regulatory region sequence-specific DNA binding"/>
    <property type="evidence" value="ECO:0000250"/>
    <property type="project" value="BHF-UCL"/>
</dbReference>
<dbReference type="GO" id="GO:1990837">
    <property type="term" value="F:sequence-specific double-stranded DNA binding"/>
    <property type="evidence" value="ECO:0000314"/>
    <property type="project" value="ARUK-UCL"/>
</dbReference>
<dbReference type="GO" id="GO:0001222">
    <property type="term" value="F:transcription corepressor binding"/>
    <property type="evidence" value="ECO:0000353"/>
    <property type="project" value="UniProtKB"/>
</dbReference>
<dbReference type="GO" id="GO:0002062">
    <property type="term" value="P:chondrocyte differentiation"/>
    <property type="evidence" value="ECO:0000318"/>
    <property type="project" value="GO_Central"/>
</dbReference>
<dbReference type="GO" id="GO:0030097">
    <property type="term" value="P:hemopoiesis"/>
    <property type="evidence" value="ECO:0000318"/>
    <property type="project" value="GO_Central"/>
</dbReference>
<dbReference type="GO" id="GO:0043371">
    <property type="term" value="P:negative regulation of CD4-positive, alpha-beta T cell differentiation"/>
    <property type="evidence" value="ECO:0000250"/>
    <property type="project" value="UniProtKB"/>
</dbReference>
<dbReference type="GO" id="GO:0045786">
    <property type="term" value="P:negative regulation of cell cycle"/>
    <property type="evidence" value="ECO:0000250"/>
    <property type="project" value="UniProtKB"/>
</dbReference>
<dbReference type="GO" id="GO:0050680">
    <property type="term" value="P:negative regulation of epithelial cell proliferation"/>
    <property type="evidence" value="ECO:0000250"/>
    <property type="project" value="UniProtKB"/>
</dbReference>
<dbReference type="GO" id="GO:0000122">
    <property type="term" value="P:negative regulation of transcription by RNA polymerase II"/>
    <property type="evidence" value="ECO:0000250"/>
    <property type="project" value="BHF-UCL"/>
</dbReference>
<dbReference type="GO" id="GO:0030182">
    <property type="term" value="P:neuron differentiation"/>
    <property type="evidence" value="ECO:0000318"/>
    <property type="project" value="GO_Central"/>
</dbReference>
<dbReference type="GO" id="GO:0001503">
    <property type="term" value="P:ossification"/>
    <property type="evidence" value="ECO:0000318"/>
    <property type="project" value="GO_Central"/>
</dbReference>
<dbReference type="GO" id="GO:0048935">
    <property type="term" value="P:peripheral nervous system neuron development"/>
    <property type="evidence" value="ECO:0000304"/>
    <property type="project" value="BHF-UCL"/>
</dbReference>
<dbReference type="GO" id="GO:0043378">
    <property type="term" value="P:positive regulation of CD8-positive, alpha-beta T cell differentiation"/>
    <property type="evidence" value="ECO:0000250"/>
    <property type="project" value="UniProtKB"/>
</dbReference>
<dbReference type="GO" id="GO:0045893">
    <property type="term" value="P:positive regulation of DNA-templated transcription"/>
    <property type="evidence" value="ECO:0000314"/>
    <property type="project" value="UniProtKB"/>
</dbReference>
<dbReference type="GO" id="GO:0006468">
    <property type="term" value="P:protein phosphorylation"/>
    <property type="evidence" value="ECO:0000314"/>
    <property type="project" value="UniProtKB"/>
</dbReference>
<dbReference type="GO" id="GO:0045595">
    <property type="term" value="P:regulation of cell differentiation"/>
    <property type="evidence" value="ECO:0000318"/>
    <property type="project" value="GO_Central"/>
</dbReference>
<dbReference type="GO" id="GO:0006355">
    <property type="term" value="P:regulation of DNA-templated transcription"/>
    <property type="evidence" value="ECO:0000303"/>
    <property type="project" value="UniProtKB"/>
</dbReference>
<dbReference type="GO" id="GO:0006357">
    <property type="term" value="P:regulation of transcription by RNA polymerase II"/>
    <property type="evidence" value="ECO:0000318"/>
    <property type="project" value="GO_Central"/>
</dbReference>
<dbReference type="GO" id="GO:0071559">
    <property type="term" value="P:response to transforming growth factor beta"/>
    <property type="evidence" value="ECO:0000314"/>
    <property type="project" value="UniProtKB"/>
</dbReference>
<dbReference type="FunFam" id="2.60.40.720:FF:000001">
    <property type="entry name" value="Runt-related transcription factor"/>
    <property type="match status" value="1"/>
</dbReference>
<dbReference type="Gene3D" id="2.60.40.720">
    <property type="match status" value="1"/>
</dbReference>
<dbReference type="InterPro" id="IPR000040">
    <property type="entry name" value="AML1_Runt"/>
</dbReference>
<dbReference type="InterPro" id="IPR008967">
    <property type="entry name" value="p53-like_TF_DNA-bd_sf"/>
</dbReference>
<dbReference type="InterPro" id="IPR012346">
    <property type="entry name" value="p53/RUNT-type_TF_DNA-bd_sf"/>
</dbReference>
<dbReference type="InterPro" id="IPR013524">
    <property type="entry name" value="Runt_dom"/>
</dbReference>
<dbReference type="InterPro" id="IPR013711">
    <property type="entry name" value="RunxI_C_dom"/>
</dbReference>
<dbReference type="InterPro" id="IPR016554">
    <property type="entry name" value="TF_Runt-rel_RUNX"/>
</dbReference>
<dbReference type="PANTHER" id="PTHR11950">
    <property type="entry name" value="RUNT RELATED"/>
    <property type="match status" value="1"/>
</dbReference>
<dbReference type="PANTHER" id="PTHR11950:SF43">
    <property type="entry name" value="RUNT-RELATED TRANSCRIPTION FACTOR 3"/>
    <property type="match status" value="1"/>
</dbReference>
<dbReference type="Pfam" id="PF00853">
    <property type="entry name" value="Runt"/>
    <property type="match status" value="1"/>
</dbReference>
<dbReference type="Pfam" id="PF08504">
    <property type="entry name" value="RunxI"/>
    <property type="match status" value="1"/>
</dbReference>
<dbReference type="PIRSF" id="PIRSF009374">
    <property type="entry name" value="TF_Runt-rel_RUNX"/>
    <property type="match status" value="1"/>
</dbReference>
<dbReference type="PRINTS" id="PR00967">
    <property type="entry name" value="ONCOGENEAML1"/>
</dbReference>
<dbReference type="SUPFAM" id="SSF49417">
    <property type="entry name" value="p53-like transcription factors"/>
    <property type="match status" value="1"/>
</dbReference>
<dbReference type="PROSITE" id="PS51062">
    <property type="entry name" value="RUNT"/>
    <property type="match status" value="1"/>
</dbReference>
<proteinExistence type="evidence at protein level"/>
<protein>
    <recommendedName>
        <fullName>Runt-related transcription factor 3</fullName>
    </recommendedName>
    <alternativeName>
        <fullName>Acute myeloid leukemia 2 protein</fullName>
    </alternativeName>
    <alternativeName>
        <fullName>Core-binding factor subunit alpha-3</fullName>
        <shortName>CBF-alpha-3</shortName>
    </alternativeName>
    <alternativeName>
        <fullName>Oncogene AML-2</fullName>
    </alternativeName>
    <alternativeName>
        <fullName>Polyomavirus enhancer-binding protein 2 alpha C subunit</fullName>
        <shortName>PEA2-alpha C</shortName>
        <shortName>PEBP2-alpha C</shortName>
    </alternativeName>
    <alternativeName>
        <fullName>SL3-3 enhancer factor 1 alpha C subunit</fullName>
    </alternativeName>
    <alternativeName>
        <fullName>SL3/AKV core-binding factor alpha C subunit</fullName>
    </alternativeName>
</protein>
<gene>
    <name type="primary">RUNX3</name>
    <name type="synonym">AML2</name>
    <name type="synonym">CBFA3</name>
    <name type="synonym">PEBP2A3</name>
</gene>
<feature type="chain" id="PRO_0000174662" description="Runt-related transcription factor 3">
    <location>
        <begin position="1"/>
        <end position="415"/>
    </location>
</feature>
<feature type="domain" description="Runt" evidence="2">
    <location>
        <begin position="54"/>
        <end position="182"/>
    </location>
</feature>
<feature type="region of interest" description="Disordered" evidence="3">
    <location>
        <begin position="1"/>
        <end position="48"/>
    </location>
</feature>
<feature type="region of interest" description="Disordered" evidence="3">
    <location>
        <begin position="176"/>
        <end position="266"/>
    </location>
</feature>
<feature type="region of interest" description="Disordered" evidence="3">
    <location>
        <begin position="375"/>
        <end position="415"/>
    </location>
</feature>
<feature type="compositionally biased region" description="Basic and acidic residues" evidence="3">
    <location>
        <begin position="186"/>
        <end position="205"/>
    </location>
</feature>
<feature type="compositionally biased region" description="Polar residues" evidence="3">
    <location>
        <begin position="209"/>
        <end position="240"/>
    </location>
</feature>
<feature type="compositionally biased region" description="Polar residues" evidence="3">
    <location>
        <begin position="393"/>
        <end position="402"/>
    </location>
</feature>
<feature type="compositionally biased region" description="Basic and acidic residues" evidence="3">
    <location>
        <begin position="406"/>
        <end position="415"/>
    </location>
</feature>
<feature type="modified residue" description="Phosphoserine" evidence="11">
    <location>
        <position position="243"/>
    </location>
</feature>
<feature type="cross-link" description="Glycyl lysine isopeptide (Lys-Gly) (interchain with G-Cter in SUMO2)" evidence="12">
    <location>
        <position position="192"/>
    </location>
</feature>
<feature type="splice variant" id="VSP_005949" description="In isoform 2." evidence="9">
    <original>MRIPV</original>
    <variation>MASNSIFDSFPTYSPTFIR</variation>
    <location>
        <begin position="1"/>
        <end position="5"/>
    </location>
</feature>
<feature type="sequence conflict" description="In Ref. 2; CAA56093." evidence="10" ref="2">
    <original>D</original>
    <variation>V</variation>
    <location>
        <position position="249"/>
    </location>
</feature>
<feature type="sequence conflict" description="In Ref. 2; CAA56093." evidence="10" ref="2">
    <original>P</original>
    <variation>S</variation>
    <location>
        <position position="253"/>
    </location>
</feature>
<feature type="sequence conflict" description="In Ref. 2; CAA56093." evidence="10" ref="2">
    <original>P</original>
    <variation>S</variation>
    <location>
        <position position="256"/>
    </location>
</feature>
<feature type="sequence conflict" description="In Ref. 2; CAA56093." evidence="10" ref="2">
    <original>T</original>
    <variation>S</variation>
    <location>
        <position position="259"/>
    </location>
</feature>
<feature type="sequence conflict" description="In Ref. 2; CAA56093." evidence="10" ref="2">
    <original>MH</original>
    <variation>IY</variation>
    <location>
        <begin position="268"/>
        <end position="269"/>
    </location>
</feature>
<feature type="sequence conflict" description="In Ref. 2; CAA56093." evidence="10" ref="2">
    <original>P</original>
    <variation>T</variation>
    <location>
        <position position="271"/>
    </location>
</feature>
<feature type="sequence conflict" description="In Ref. 2; CAA56093." evidence="10" ref="2">
    <original>MP</original>
    <variation>IS</variation>
    <location>
        <begin position="297"/>
        <end position="298"/>
    </location>
</feature>
<name>RUNX3_HUMAN</name>
<sequence length="415" mass="44356">MRIPVDPSTSRRFTPPSPAFPCGGGGGKMGENSGALSAQAAVGPGGRARPEVRSMVDVLADHAGELVRTDSPNFLCSVLPSHWRCNKTLPVAFKVVALGDVPDGTVVTVMAGNDENYSAELRNASAVMKNQVARFNDLRFVGRSGRGKSFTLTITVFTNPTQVATYHRAIKVTVDGPREPRRHRQKLEDQTKPFPDRFGDLERLRMRVTPSTPSPRGSLSTTSHFSSQPQTPIQGTSELNPFSDPRQFDRSFPTLPTLTESRFPDPRMHYPGAMSAAFPYSATPSGTSISSLSVAGMPATSRFHHTYLPPPYPGAPQNQSGPFQANPSPYHLYYGTSSGSYQFSMVAGSSSGGDRSPTRMLASCTSSAASVAAGNLMNPSLGGQSDGVEADGSHSNSPTALSTPGRMDEAVWRPY</sequence>